<evidence type="ECO:0000250" key="1"/>
<evidence type="ECO:0000305" key="2"/>
<accession>P0CO15</accession>
<accession>Q55NB7</accession>
<accession>Q5KBQ2</accession>
<keyword id="KW-0539">Nucleus</keyword>
<keyword id="KW-0677">Repeat</keyword>
<keyword id="KW-0687">Ribonucleoprotein</keyword>
<keyword id="KW-0690">Ribosome biogenesis</keyword>
<keyword id="KW-0698">rRNA processing</keyword>
<gene>
    <name type="primary">UTP10</name>
    <name type="ordered locus">CNBH1700</name>
</gene>
<dbReference type="EMBL" id="AAEY01000042">
    <property type="protein sequence ID" value="EAL19068.1"/>
    <property type="molecule type" value="Genomic_DNA"/>
</dbReference>
<dbReference type="RefSeq" id="XP_773715.1">
    <property type="nucleotide sequence ID" value="XM_768622.1"/>
</dbReference>
<dbReference type="SMR" id="P0CO15"/>
<dbReference type="GeneID" id="4937690"/>
<dbReference type="KEGG" id="cnb:CNBH1700"/>
<dbReference type="VEuPathDB" id="FungiDB:CNBH1700"/>
<dbReference type="HOGENOM" id="CLU_001128_0_0_1"/>
<dbReference type="OrthoDB" id="4470at5206"/>
<dbReference type="GO" id="GO:0030686">
    <property type="term" value="C:90S preribosome"/>
    <property type="evidence" value="ECO:0007669"/>
    <property type="project" value="TreeGrafter"/>
</dbReference>
<dbReference type="GO" id="GO:0032040">
    <property type="term" value="C:small-subunit processome"/>
    <property type="evidence" value="ECO:0007669"/>
    <property type="project" value="TreeGrafter"/>
</dbReference>
<dbReference type="GO" id="GO:0034455">
    <property type="term" value="C:t-UTP complex"/>
    <property type="evidence" value="ECO:0007669"/>
    <property type="project" value="TreeGrafter"/>
</dbReference>
<dbReference type="GO" id="GO:0030515">
    <property type="term" value="F:snoRNA binding"/>
    <property type="evidence" value="ECO:0007669"/>
    <property type="project" value="TreeGrafter"/>
</dbReference>
<dbReference type="GO" id="GO:0000462">
    <property type="term" value="P:maturation of SSU-rRNA from tricistronic rRNA transcript (SSU-rRNA, 5.8S rRNA, LSU-rRNA)"/>
    <property type="evidence" value="ECO:0007669"/>
    <property type="project" value="TreeGrafter"/>
</dbReference>
<dbReference type="GO" id="GO:0045943">
    <property type="term" value="P:positive regulation of transcription by RNA polymerase I"/>
    <property type="evidence" value="ECO:0007669"/>
    <property type="project" value="TreeGrafter"/>
</dbReference>
<dbReference type="Gene3D" id="1.25.10.10">
    <property type="entry name" value="Leucine-rich Repeat Variant"/>
    <property type="match status" value="1"/>
</dbReference>
<dbReference type="InterPro" id="IPR011989">
    <property type="entry name" value="ARM-like"/>
</dbReference>
<dbReference type="InterPro" id="IPR016024">
    <property type="entry name" value="ARM-type_fold"/>
</dbReference>
<dbReference type="InterPro" id="IPR012954">
    <property type="entry name" value="BP28_C_dom"/>
</dbReference>
<dbReference type="InterPro" id="IPR056473">
    <property type="entry name" value="HEAT_Utp10/HEAT1"/>
</dbReference>
<dbReference type="InterPro" id="IPR022125">
    <property type="entry name" value="U3snoRNP10_N"/>
</dbReference>
<dbReference type="InterPro" id="IPR040191">
    <property type="entry name" value="UTP10"/>
</dbReference>
<dbReference type="PANTHER" id="PTHR13457">
    <property type="entry name" value="BAP28"/>
    <property type="match status" value="1"/>
</dbReference>
<dbReference type="PANTHER" id="PTHR13457:SF1">
    <property type="entry name" value="HEAT REPEAT-CONTAINING PROTEIN 1"/>
    <property type="match status" value="1"/>
</dbReference>
<dbReference type="Pfam" id="PF08146">
    <property type="entry name" value="BP28CT"/>
    <property type="match status" value="1"/>
</dbReference>
<dbReference type="Pfam" id="PF23243">
    <property type="entry name" value="HEAT_HEATR1"/>
    <property type="match status" value="1"/>
</dbReference>
<dbReference type="Pfam" id="PF12397">
    <property type="entry name" value="U3snoRNP10"/>
    <property type="match status" value="1"/>
</dbReference>
<dbReference type="SMART" id="SM01036">
    <property type="entry name" value="BP28CT"/>
    <property type="match status" value="1"/>
</dbReference>
<dbReference type="SUPFAM" id="SSF48371">
    <property type="entry name" value="ARM repeat"/>
    <property type="match status" value="2"/>
</dbReference>
<feature type="chain" id="PRO_0000410112" description="U3 small nucleolar RNA-associated protein 10">
    <location>
        <begin position="1"/>
        <end position="2021"/>
    </location>
</feature>
<feature type="repeat" description="HEAT 1">
    <location>
        <begin position="837"/>
        <end position="875"/>
    </location>
</feature>
<feature type="repeat" description="HEAT 2">
    <location>
        <begin position="976"/>
        <end position="1014"/>
    </location>
</feature>
<feature type="repeat" description="HEAT 3">
    <location>
        <begin position="1281"/>
        <end position="1319"/>
    </location>
</feature>
<feature type="repeat" description="HEAT 4">
    <location>
        <begin position="1935"/>
        <end position="1973"/>
    </location>
</feature>
<feature type="repeat" description="HEAT 5">
    <location>
        <begin position="1977"/>
        <end position="2015"/>
    </location>
</feature>
<name>UTP10_CRYNB</name>
<comment type="function">
    <text evidence="1">Involved in nucleolar processing of pre-18S ribosomal RNA. Involved in ribosome biosynthesis (By similarity).</text>
</comment>
<comment type="subunit">
    <text evidence="1">Component of the ribosomal small subunit (SSU) processome.</text>
</comment>
<comment type="subcellular location">
    <subcellularLocation>
        <location evidence="1">Nucleus</location>
        <location evidence="1">Nucleolus</location>
    </subcellularLocation>
</comment>
<comment type="similarity">
    <text evidence="2">Belongs to the HEATR1/UTP10 family.</text>
</comment>
<protein>
    <recommendedName>
        <fullName>U3 small nucleolar RNA-associated protein 10</fullName>
    </recommendedName>
</protein>
<organism>
    <name type="scientific">Cryptococcus neoformans var. neoformans serotype D (strain B-3501A)</name>
    <name type="common">Filobasidiella neoformans</name>
    <dbReference type="NCBI Taxonomy" id="283643"/>
    <lineage>
        <taxon>Eukaryota</taxon>
        <taxon>Fungi</taxon>
        <taxon>Dikarya</taxon>
        <taxon>Basidiomycota</taxon>
        <taxon>Agaricomycotina</taxon>
        <taxon>Tremellomycetes</taxon>
        <taxon>Tremellales</taxon>
        <taxon>Cryptococcaceae</taxon>
        <taxon>Cryptococcus</taxon>
        <taxon>Cryptococcus neoformans species complex</taxon>
    </lineage>
</organism>
<sequence length="2021" mass="221620">MSSLAQQLQSIASLDAARLTSAYGAPSGKSYLFPPDVASSHDIDSIFDLAQSGFDELLSLDPEMEEFEEELFSESAKRTDRMVLSKEENDNLDRTLGRCLRRLGKWIRLMAGGKCIEWMVRRFRVHEMNVDEVLRSFLPYHESPNFPRILAIVTIPKTSPYYATFAPLVKDAQPIPRSYIVTSISPAKDKSLVLLGDIASMVQQAVKEGVVHHALLTFWTATMVDLLEGARHGKGANEGVVKQLVESFVTLLETPKAGEDVNAAVYPPLVLLTRTVPLADEPFLAIVSSLLTPGTGSNPSQRMLTLLVILNDRHTWSLGLGEHATENLAKVSQLGEILVAAMDKYRFEKALNIVVKSMLEKPDLHAKALATVLEHESLPTSVTELASTNLLQLGSSTDSQEVKAACKSLLTNLRERHPSIVDTAFLQASASLEIDTHPVDHGLVQKPSGEVAFLDVYAADISSRVTGVKSVIDMAKKGEEIESSITALEARLSDVDENVVNALYEEPKSLLEILPVEKYIAGVKPVFWAVSPISHIIGLHLDFISQHLLVSHPEAGKQIYESLLFPIFLSTEKRQPLTKSQALKLLNGGFKKLDKLSTIGPEIGKAREEGMKGAQKGNLVIAKALAGATLSSSTFEDDISFLIAQLDSTTSSARLLAYLILHSLVLTLRGPRQLSTSLSILKYLSPRLTGHSLRDLKHADENVNTEYMESVYKKPEETRTTLRAIVSILAAMGKVIKPIGQIVWLSGESKAKDASYKTFAQQIYLWANIAILPANVAHFLLRSLLTQLGEEALLFFSSIWTSSTSPVPLRISALKHALAFIHAYATLPTSPAAQGQPVDFQVVLPQILIALQDSDKDVRRVAVDVLRSVEGGEGMGDVYALDTIYGDRSEMTQLLKSVDRKKYIETLLEVAEEFVIDRLRLKAFHTEVLNMQSGKNRKESAHRRAIIGFLMSHVASYRAIDPRLVLLSLLSDVHDTSILRSAIPLLASLFDDKSEESLWLSSLPDGQQALYVQALMGSLRVQSVSVLGEAGGEGWEFLLNLLDASKSSRFIARLRILSFKAMVGGVFSALEAHQQIEYIIALIQCIHALPTDDALDAVKVLEKLDIQPRVLIELIEHLSDPLETSVNRKRQRQDAADEDRPTQAVHELITFVDSRNWPSIPASAPLVASLMSILSALLAKRLIVKEGIDYLEQEVFGAILALVERITDAQEIQRAHVGIEVVIKVIRASTNPRTAQRALLVASELARLIPDAVLHNVMPIFTFMGASDFQRDDAYTFGVVEKTVSRIVPVMTQSLKEKAQNSLELYTKSLTFLSIFTDMAGRLPRHRTLPFFVHLVKSLGASDYLAPVCMLLVDRATTKAGRNKESVSTALELPANLVAAFDVSVKTQVLGEIVQELARLIGDLSKADKEAFLSQTISENDATDRPLRQVTYLLSFLSSILGQLRGKACSQALVQSAVRQLIVLAASTSQPVMATTDIPSNLHKTLASTMLLLSADNFLGVTAELLSDGSEQDIIMSLGVFAERLPLIKSEVRLRCTKVIAEILKRIGGLLAASGATVNAALEAVKSVIKTAIAQEDGALASVLPTVVGCIGKVKDSAVIVAALSLVELLVRRLAARTIPFIQSILDTSLNLIKSTKLAATATNQAFVTLSSVIETIPTFISSKQLNAILITTIDYRRVEETNSASLFTTLAKKIRTKSLFPVLIEAWKTVQEKGGDNEMKGFFEMLRLTLKNAAREDLPSMLKPVFAFFLDVFDLRHRLQLKGVDTRVVNDVEESAIGSFLELVTKLNEPTFKPLFIRLYDWAVIDLAEGKNADDGRLTERKIVLLHVMMGLLTKFKNLLSPYMGILFPHIQELLPAFASGSVRSEPLWTLLLNVLGKSFEVDSGAFWTDALEIELLPQLVAQVPLFLPIAPSPQSPRPISSCLANLAGSTTAENVLRRLNTAVCLATRSDDPKVRLAALDALSAIWDAQAEEMVGLVPETVSEFLAELLEDESKDVEIAARGVLAKIEKVTGSLKEYLE</sequence>
<proteinExistence type="inferred from homology"/>
<reference key="1">
    <citation type="journal article" date="2005" name="Science">
        <title>The genome of the basidiomycetous yeast and human pathogen Cryptococcus neoformans.</title>
        <authorList>
            <person name="Loftus B.J."/>
            <person name="Fung E."/>
            <person name="Roncaglia P."/>
            <person name="Rowley D."/>
            <person name="Amedeo P."/>
            <person name="Bruno D."/>
            <person name="Vamathevan J."/>
            <person name="Miranda M."/>
            <person name="Anderson I.J."/>
            <person name="Fraser J.A."/>
            <person name="Allen J.E."/>
            <person name="Bosdet I.E."/>
            <person name="Brent M.R."/>
            <person name="Chiu R."/>
            <person name="Doering T.L."/>
            <person name="Donlin M.J."/>
            <person name="D'Souza C.A."/>
            <person name="Fox D.S."/>
            <person name="Grinberg V."/>
            <person name="Fu J."/>
            <person name="Fukushima M."/>
            <person name="Haas B.J."/>
            <person name="Huang J.C."/>
            <person name="Janbon G."/>
            <person name="Jones S.J.M."/>
            <person name="Koo H.L."/>
            <person name="Krzywinski M.I."/>
            <person name="Kwon-Chung K.J."/>
            <person name="Lengeler K.B."/>
            <person name="Maiti R."/>
            <person name="Marra M.A."/>
            <person name="Marra R.E."/>
            <person name="Mathewson C.A."/>
            <person name="Mitchell T.G."/>
            <person name="Pertea M."/>
            <person name="Riggs F.R."/>
            <person name="Salzberg S.L."/>
            <person name="Schein J.E."/>
            <person name="Shvartsbeyn A."/>
            <person name="Shin H."/>
            <person name="Shumway M."/>
            <person name="Specht C.A."/>
            <person name="Suh B.B."/>
            <person name="Tenney A."/>
            <person name="Utterback T.R."/>
            <person name="Wickes B.L."/>
            <person name="Wortman J.R."/>
            <person name="Wye N.H."/>
            <person name="Kronstad J.W."/>
            <person name="Lodge J.K."/>
            <person name="Heitman J."/>
            <person name="Davis R.W."/>
            <person name="Fraser C.M."/>
            <person name="Hyman R.W."/>
        </authorList>
    </citation>
    <scope>NUCLEOTIDE SEQUENCE [LARGE SCALE GENOMIC DNA]</scope>
    <source>
        <strain>B-3501A</strain>
    </source>
</reference>